<name>PPNP_ECOLC</name>
<gene>
    <name evidence="1" type="primary">ppnP</name>
    <name type="ordered locus">EcolC_3241</name>
</gene>
<comment type="function">
    <text evidence="1">Catalyzes the phosphorolysis of diverse nucleosides, yielding D-ribose 1-phosphate and the respective free bases. Can use uridine, adenosine, guanosine, cytidine, thymidine, inosine and xanthosine as substrates. Also catalyzes the reverse reactions.</text>
</comment>
<comment type="catalytic activity">
    <reaction evidence="1">
        <text>a purine D-ribonucleoside + phosphate = a purine nucleobase + alpha-D-ribose 1-phosphate</text>
        <dbReference type="Rhea" id="RHEA:19805"/>
        <dbReference type="ChEBI" id="CHEBI:26386"/>
        <dbReference type="ChEBI" id="CHEBI:43474"/>
        <dbReference type="ChEBI" id="CHEBI:57720"/>
        <dbReference type="ChEBI" id="CHEBI:142355"/>
        <dbReference type="EC" id="2.4.2.1"/>
    </reaction>
</comment>
<comment type="catalytic activity">
    <reaction evidence="1">
        <text>adenosine + phosphate = alpha-D-ribose 1-phosphate + adenine</text>
        <dbReference type="Rhea" id="RHEA:27642"/>
        <dbReference type="ChEBI" id="CHEBI:16335"/>
        <dbReference type="ChEBI" id="CHEBI:16708"/>
        <dbReference type="ChEBI" id="CHEBI:43474"/>
        <dbReference type="ChEBI" id="CHEBI:57720"/>
        <dbReference type="EC" id="2.4.2.1"/>
    </reaction>
</comment>
<comment type="catalytic activity">
    <reaction evidence="1">
        <text>cytidine + phosphate = cytosine + alpha-D-ribose 1-phosphate</text>
        <dbReference type="Rhea" id="RHEA:52540"/>
        <dbReference type="ChEBI" id="CHEBI:16040"/>
        <dbReference type="ChEBI" id="CHEBI:17562"/>
        <dbReference type="ChEBI" id="CHEBI:43474"/>
        <dbReference type="ChEBI" id="CHEBI:57720"/>
        <dbReference type="EC" id="2.4.2.2"/>
    </reaction>
</comment>
<comment type="catalytic activity">
    <reaction evidence="1">
        <text>guanosine + phosphate = alpha-D-ribose 1-phosphate + guanine</text>
        <dbReference type="Rhea" id="RHEA:13233"/>
        <dbReference type="ChEBI" id="CHEBI:16235"/>
        <dbReference type="ChEBI" id="CHEBI:16750"/>
        <dbReference type="ChEBI" id="CHEBI:43474"/>
        <dbReference type="ChEBI" id="CHEBI:57720"/>
        <dbReference type="EC" id="2.4.2.1"/>
    </reaction>
</comment>
<comment type="catalytic activity">
    <reaction evidence="1">
        <text>inosine + phosphate = alpha-D-ribose 1-phosphate + hypoxanthine</text>
        <dbReference type="Rhea" id="RHEA:27646"/>
        <dbReference type="ChEBI" id="CHEBI:17368"/>
        <dbReference type="ChEBI" id="CHEBI:17596"/>
        <dbReference type="ChEBI" id="CHEBI:43474"/>
        <dbReference type="ChEBI" id="CHEBI:57720"/>
        <dbReference type="EC" id="2.4.2.1"/>
    </reaction>
</comment>
<comment type="catalytic activity">
    <reaction evidence="1">
        <text>thymidine + phosphate = 2-deoxy-alpha-D-ribose 1-phosphate + thymine</text>
        <dbReference type="Rhea" id="RHEA:16037"/>
        <dbReference type="ChEBI" id="CHEBI:17748"/>
        <dbReference type="ChEBI" id="CHEBI:17821"/>
        <dbReference type="ChEBI" id="CHEBI:43474"/>
        <dbReference type="ChEBI" id="CHEBI:57259"/>
        <dbReference type="EC" id="2.4.2.2"/>
    </reaction>
</comment>
<comment type="catalytic activity">
    <reaction evidence="1">
        <text>uridine + phosphate = alpha-D-ribose 1-phosphate + uracil</text>
        <dbReference type="Rhea" id="RHEA:24388"/>
        <dbReference type="ChEBI" id="CHEBI:16704"/>
        <dbReference type="ChEBI" id="CHEBI:17568"/>
        <dbReference type="ChEBI" id="CHEBI:43474"/>
        <dbReference type="ChEBI" id="CHEBI:57720"/>
        <dbReference type="EC" id="2.4.2.2"/>
    </reaction>
</comment>
<comment type="catalytic activity">
    <reaction evidence="1">
        <text>xanthosine + phosphate = alpha-D-ribose 1-phosphate + xanthine</text>
        <dbReference type="Rhea" id="RHEA:27638"/>
        <dbReference type="ChEBI" id="CHEBI:17712"/>
        <dbReference type="ChEBI" id="CHEBI:18107"/>
        <dbReference type="ChEBI" id="CHEBI:43474"/>
        <dbReference type="ChEBI" id="CHEBI:57720"/>
        <dbReference type="EC" id="2.4.2.1"/>
    </reaction>
</comment>
<comment type="similarity">
    <text evidence="1">Belongs to the nucleoside phosphorylase PpnP family.</text>
</comment>
<reference key="1">
    <citation type="submission" date="2008-02" db="EMBL/GenBank/DDBJ databases">
        <title>Complete sequence of Escherichia coli C str. ATCC 8739.</title>
        <authorList>
            <person name="Copeland A."/>
            <person name="Lucas S."/>
            <person name="Lapidus A."/>
            <person name="Glavina del Rio T."/>
            <person name="Dalin E."/>
            <person name="Tice H."/>
            <person name="Bruce D."/>
            <person name="Goodwin L."/>
            <person name="Pitluck S."/>
            <person name="Kiss H."/>
            <person name="Brettin T."/>
            <person name="Detter J.C."/>
            <person name="Han C."/>
            <person name="Kuske C.R."/>
            <person name="Schmutz J."/>
            <person name="Larimer F."/>
            <person name="Land M."/>
            <person name="Hauser L."/>
            <person name="Kyrpides N."/>
            <person name="Mikhailova N."/>
            <person name="Ingram L."/>
            <person name="Richardson P."/>
        </authorList>
    </citation>
    <scope>NUCLEOTIDE SEQUENCE [LARGE SCALE GENOMIC DNA]</scope>
    <source>
        <strain>ATCC 8739 / DSM 1576 / NBRC 3972 / NCIMB 8545 / WDCM 00012 / Crooks</strain>
    </source>
</reference>
<organism>
    <name type="scientific">Escherichia coli (strain ATCC 8739 / DSM 1576 / NBRC 3972 / NCIMB 8545 / WDCM 00012 / Crooks)</name>
    <dbReference type="NCBI Taxonomy" id="481805"/>
    <lineage>
        <taxon>Bacteria</taxon>
        <taxon>Pseudomonadati</taxon>
        <taxon>Pseudomonadota</taxon>
        <taxon>Gammaproteobacteria</taxon>
        <taxon>Enterobacterales</taxon>
        <taxon>Enterobacteriaceae</taxon>
        <taxon>Escherichia</taxon>
    </lineage>
</organism>
<proteinExistence type="inferred from homology"/>
<keyword id="KW-0328">Glycosyltransferase</keyword>
<keyword id="KW-0808">Transferase</keyword>
<protein>
    <recommendedName>
        <fullName evidence="1">Pyrimidine/purine nucleoside phosphorylase</fullName>
        <ecNumber evidence="1">2.4.2.1</ecNumber>
        <ecNumber evidence="1">2.4.2.2</ecNumber>
    </recommendedName>
    <alternativeName>
        <fullName evidence="1">Adenosine phosphorylase</fullName>
    </alternativeName>
    <alternativeName>
        <fullName evidence="1">Cytidine phosphorylase</fullName>
    </alternativeName>
    <alternativeName>
        <fullName evidence="1">Guanosine phosphorylase</fullName>
    </alternativeName>
    <alternativeName>
        <fullName evidence="1">Inosine phosphorylase</fullName>
    </alternativeName>
    <alternativeName>
        <fullName evidence="1">Thymidine phosphorylase</fullName>
    </alternativeName>
    <alternativeName>
        <fullName evidence="1">Uridine phosphorylase</fullName>
    </alternativeName>
    <alternativeName>
        <fullName evidence="1">Xanthosine phosphorylase</fullName>
    </alternativeName>
</protein>
<dbReference type="EC" id="2.4.2.1" evidence="1"/>
<dbReference type="EC" id="2.4.2.2" evidence="1"/>
<dbReference type="EMBL" id="CP000946">
    <property type="protein sequence ID" value="ACA78863.1"/>
    <property type="molecule type" value="Genomic_DNA"/>
</dbReference>
<dbReference type="RefSeq" id="WP_000941942.1">
    <property type="nucleotide sequence ID" value="NZ_MTFT01000010.1"/>
</dbReference>
<dbReference type="SMR" id="B1J057"/>
<dbReference type="GeneID" id="93777070"/>
<dbReference type="KEGG" id="ecl:EcolC_3241"/>
<dbReference type="HOGENOM" id="CLU_157874_0_0_6"/>
<dbReference type="GO" id="GO:0005829">
    <property type="term" value="C:cytosol"/>
    <property type="evidence" value="ECO:0007669"/>
    <property type="project" value="TreeGrafter"/>
</dbReference>
<dbReference type="GO" id="GO:0047975">
    <property type="term" value="F:guanosine phosphorylase activity"/>
    <property type="evidence" value="ECO:0007669"/>
    <property type="project" value="UniProtKB-EC"/>
</dbReference>
<dbReference type="GO" id="GO:0004731">
    <property type="term" value="F:purine-nucleoside phosphorylase activity"/>
    <property type="evidence" value="ECO:0007669"/>
    <property type="project" value="UniProtKB-UniRule"/>
</dbReference>
<dbReference type="GO" id="GO:0009032">
    <property type="term" value="F:thymidine phosphorylase activity"/>
    <property type="evidence" value="ECO:0007669"/>
    <property type="project" value="UniProtKB-EC"/>
</dbReference>
<dbReference type="GO" id="GO:0004850">
    <property type="term" value="F:uridine phosphorylase activity"/>
    <property type="evidence" value="ECO:0007669"/>
    <property type="project" value="UniProtKB-EC"/>
</dbReference>
<dbReference type="CDD" id="cd20296">
    <property type="entry name" value="cupin_PpnP-like"/>
    <property type="match status" value="1"/>
</dbReference>
<dbReference type="FunFam" id="2.60.120.10:FF:000016">
    <property type="entry name" value="Pyrimidine/purine nucleoside phosphorylase"/>
    <property type="match status" value="1"/>
</dbReference>
<dbReference type="Gene3D" id="2.60.120.10">
    <property type="entry name" value="Jelly Rolls"/>
    <property type="match status" value="1"/>
</dbReference>
<dbReference type="HAMAP" id="MF_01537">
    <property type="entry name" value="Nucleos_phosphorylase_PpnP"/>
    <property type="match status" value="1"/>
</dbReference>
<dbReference type="InterPro" id="IPR009664">
    <property type="entry name" value="Ppnp"/>
</dbReference>
<dbReference type="InterPro" id="IPR014710">
    <property type="entry name" value="RmlC-like_jellyroll"/>
</dbReference>
<dbReference type="InterPro" id="IPR011051">
    <property type="entry name" value="RmlC_Cupin_sf"/>
</dbReference>
<dbReference type="NCBIfam" id="NF007875">
    <property type="entry name" value="PRK10579.1"/>
    <property type="match status" value="1"/>
</dbReference>
<dbReference type="PANTHER" id="PTHR36540">
    <property type="entry name" value="PYRIMIDINE/PURINE NUCLEOSIDE PHOSPHORYLASE"/>
    <property type="match status" value="1"/>
</dbReference>
<dbReference type="PANTHER" id="PTHR36540:SF1">
    <property type="entry name" value="PYRIMIDINE_PURINE NUCLEOSIDE PHOSPHORYLASE"/>
    <property type="match status" value="1"/>
</dbReference>
<dbReference type="Pfam" id="PF06865">
    <property type="entry name" value="Ppnp"/>
    <property type="match status" value="1"/>
</dbReference>
<dbReference type="SUPFAM" id="SSF51182">
    <property type="entry name" value="RmlC-like cupins"/>
    <property type="match status" value="1"/>
</dbReference>
<feature type="chain" id="PRO_1000087608" description="Pyrimidine/purine nucleoside phosphorylase">
    <location>
        <begin position="1"/>
        <end position="94"/>
    </location>
</feature>
<sequence length="94" mass="10234">MLQSNEYFSGKVKSIGFSSSSTGRASVGVMVEGEYTFSTAEPEEMTVISGALNVLLPDATDWQVYEAGSVFNVPGHSEFHLQVAEPTSYLCRYL</sequence>
<accession>B1J057</accession>
<evidence type="ECO:0000255" key="1">
    <source>
        <dbReference type="HAMAP-Rule" id="MF_01537"/>
    </source>
</evidence>